<evidence type="ECO:0000250" key="1">
    <source>
        <dbReference type="UniProtKB" id="P38301"/>
    </source>
</evidence>
<evidence type="ECO:0000250" key="2">
    <source>
        <dbReference type="UniProtKB" id="Q9HC07"/>
    </source>
</evidence>
<evidence type="ECO:0000255" key="3"/>
<evidence type="ECO:0000256" key="4">
    <source>
        <dbReference type="SAM" id="MobiDB-lite"/>
    </source>
</evidence>
<evidence type="ECO:0000269" key="5">
    <source>
    </source>
</evidence>
<evidence type="ECO:0000303" key="6">
    <source>
    </source>
</evidence>
<evidence type="ECO:0000305" key="7"/>
<evidence type="ECO:0000312" key="8">
    <source>
        <dbReference type="MGI" id="MGI:894407"/>
    </source>
</evidence>
<proteinExistence type="evidence at protein level"/>
<accession>P52875</accession>
<accession>Q9R292</accession>
<keyword id="KW-0050">Antiport</keyword>
<keyword id="KW-0175">Coiled coil</keyword>
<keyword id="KW-0333">Golgi apparatus</keyword>
<keyword id="KW-0472">Membrane</keyword>
<keyword id="KW-1185">Reference proteome</keyword>
<keyword id="KW-0732">Signal</keyword>
<keyword id="KW-0812">Transmembrane</keyword>
<keyword id="KW-1133">Transmembrane helix</keyword>
<keyword id="KW-0813">Transport</keyword>
<dbReference type="EMBL" id="M23568">
    <property type="protein sequence ID" value="AAA40456.1"/>
    <property type="status" value="ALT_FRAME"/>
    <property type="molecule type" value="mRNA"/>
</dbReference>
<dbReference type="EMBL" id="AF146793">
    <property type="protein sequence ID" value="AAD30566.2"/>
    <property type="molecule type" value="Genomic_DNA"/>
</dbReference>
<dbReference type="CCDS" id="CCDS19359.1"/>
<dbReference type="PIR" id="A31351">
    <property type="entry name" value="A31351"/>
</dbReference>
<dbReference type="RefSeq" id="NP_035756.2">
    <property type="nucleotide sequence ID" value="NM_011626.2"/>
</dbReference>
<dbReference type="BioGRID" id="204284">
    <property type="interactions" value="13"/>
</dbReference>
<dbReference type="FunCoup" id="P52875">
    <property type="interactions" value="3568"/>
</dbReference>
<dbReference type="STRING" id="10090.ENSMUSP00000031144"/>
<dbReference type="TCDB" id="2.A.106.2.1">
    <property type="family name" value="the ca(2+):h(+) antiporter-2 (caca2) family"/>
</dbReference>
<dbReference type="GlyGen" id="P52875">
    <property type="glycosylation" value="1 site"/>
</dbReference>
<dbReference type="iPTMnet" id="P52875"/>
<dbReference type="PhosphoSitePlus" id="P52875"/>
<dbReference type="PaxDb" id="10090-ENSMUSP00000031144"/>
<dbReference type="PeptideAtlas" id="P52875"/>
<dbReference type="ProteomicsDB" id="259464"/>
<dbReference type="Pumba" id="P52875"/>
<dbReference type="Antibodypedia" id="44090">
    <property type="antibodies" value="126 antibodies from 22 providers"/>
</dbReference>
<dbReference type="DNASU" id="21982"/>
<dbReference type="Ensembl" id="ENSMUST00000031144.14">
    <property type="protein sequence ID" value="ENSMUSP00000031144.8"/>
    <property type="gene ID" value="ENSMUSG00000029234.14"/>
</dbReference>
<dbReference type="GeneID" id="21982"/>
<dbReference type="KEGG" id="mmu:21982"/>
<dbReference type="UCSC" id="uc008xup.1">
    <property type="organism name" value="mouse"/>
</dbReference>
<dbReference type="AGR" id="MGI:894407"/>
<dbReference type="CTD" id="55858"/>
<dbReference type="MGI" id="MGI:894407">
    <property type="gene designation" value="Tmem165"/>
</dbReference>
<dbReference type="VEuPathDB" id="HostDB:ENSMUSG00000029234"/>
<dbReference type="eggNOG" id="KOG2881">
    <property type="taxonomic scope" value="Eukaryota"/>
</dbReference>
<dbReference type="GeneTree" id="ENSGT00390000005261"/>
<dbReference type="HOGENOM" id="CLU_040186_0_1_1"/>
<dbReference type="InParanoid" id="P52875"/>
<dbReference type="OMA" id="ILGHAIC"/>
<dbReference type="OrthoDB" id="442680at2759"/>
<dbReference type="PhylomeDB" id="P52875"/>
<dbReference type="TreeFam" id="TF105960"/>
<dbReference type="BioGRID-ORCS" id="21982">
    <property type="hits" value="6 hits in 78 CRISPR screens"/>
</dbReference>
<dbReference type="ChiTaRS" id="Tmem165">
    <property type="organism name" value="mouse"/>
</dbReference>
<dbReference type="PRO" id="PR:P52875"/>
<dbReference type="Proteomes" id="UP000000589">
    <property type="component" value="Chromosome 5"/>
</dbReference>
<dbReference type="RNAct" id="P52875">
    <property type="molecule type" value="protein"/>
</dbReference>
<dbReference type="Bgee" id="ENSMUSG00000029234">
    <property type="expression patterns" value="Expressed in molar tooth and 260 other cell types or tissues"/>
</dbReference>
<dbReference type="ExpressionAtlas" id="P52875">
    <property type="expression patterns" value="baseline and differential"/>
</dbReference>
<dbReference type="GO" id="GO:0033106">
    <property type="term" value="C:cis-Golgi network membrane"/>
    <property type="evidence" value="ECO:0000314"/>
    <property type="project" value="UniProtKB"/>
</dbReference>
<dbReference type="GO" id="GO:0010008">
    <property type="term" value="C:endosome membrane"/>
    <property type="evidence" value="ECO:0000250"/>
    <property type="project" value="UniProtKB"/>
</dbReference>
<dbReference type="GO" id="GO:0005794">
    <property type="term" value="C:Golgi apparatus"/>
    <property type="evidence" value="ECO:0000250"/>
    <property type="project" value="UniProtKB"/>
</dbReference>
<dbReference type="GO" id="GO:0000139">
    <property type="term" value="C:Golgi membrane"/>
    <property type="evidence" value="ECO:0007669"/>
    <property type="project" value="UniProtKB-SubCell"/>
</dbReference>
<dbReference type="GO" id="GO:0005765">
    <property type="term" value="C:lysosomal membrane"/>
    <property type="evidence" value="ECO:0000250"/>
    <property type="project" value="UniProtKB"/>
</dbReference>
<dbReference type="GO" id="GO:0032588">
    <property type="term" value="C:trans-Golgi network membrane"/>
    <property type="evidence" value="ECO:0000250"/>
    <property type="project" value="UniProtKB"/>
</dbReference>
<dbReference type="GO" id="GO:0015297">
    <property type="term" value="F:antiporter activity"/>
    <property type="evidence" value="ECO:0007669"/>
    <property type="project" value="UniProtKB-KW"/>
</dbReference>
<dbReference type="GO" id="GO:0046873">
    <property type="term" value="F:metal ion transmembrane transporter activity"/>
    <property type="evidence" value="ECO:0007669"/>
    <property type="project" value="InterPro"/>
</dbReference>
<dbReference type="GO" id="GO:0006816">
    <property type="term" value="P:calcium ion transport"/>
    <property type="evidence" value="ECO:0000315"/>
    <property type="project" value="UniProtKB"/>
</dbReference>
<dbReference type="GO" id="GO:0032472">
    <property type="term" value="P:Golgi calcium ion transport"/>
    <property type="evidence" value="ECO:0000250"/>
    <property type="project" value="UniProtKB"/>
</dbReference>
<dbReference type="GO" id="GO:0006874">
    <property type="term" value="P:intracellular calcium ion homeostasis"/>
    <property type="evidence" value="ECO:0000250"/>
    <property type="project" value="UniProtKB"/>
</dbReference>
<dbReference type="GO" id="GO:0006828">
    <property type="term" value="P:manganese ion transport"/>
    <property type="evidence" value="ECO:0000315"/>
    <property type="project" value="UniProtKB"/>
</dbReference>
<dbReference type="GO" id="GO:0006487">
    <property type="term" value="P:protein N-linked glycosylation"/>
    <property type="evidence" value="ECO:0000250"/>
    <property type="project" value="UniProtKB"/>
</dbReference>
<dbReference type="GO" id="GO:0035751">
    <property type="term" value="P:regulation of lysosomal lumen pH"/>
    <property type="evidence" value="ECO:0000250"/>
    <property type="project" value="UniProtKB"/>
</dbReference>
<dbReference type="InterPro" id="IPR001727">
    <property type="entry name" value="GDT1-like"/>
</dbReference>
<dbReference type="InterPro" id="IPR049555">
    <property type="entry name" value="GDT1-like_CS"/>
</dbReference>
<dbReference type="PANTHER" id="PTHR12608:SF1">
    <property type="entry name" value="TRANSMEMBRANE PROTEIN 165"/>
    <property type="match status" value="1"/>
</dbReference>
<dbReference type="PANTHER" id="PTHR12608">
    <property type="entry name" value="TRANSMEMBRANE PROTEIN HTP-1 RELATED"/>
    <property type="match status" value="1"/>
</dbReference>
<dbReference type="Pfam" id="PF01169">
    <property type="entry name" value="GDT1"/>
    <property type="match status" value="2"/>
</dbReference>
<dbReference type="PROSITE" id="PS01214">
    <property type="entry name" value="UPF0016"/>
    <property type="match status" value="1"/>
</dbReference>
<feature type="signal peptide" evidence="3">
    <location>
        <begin position="1"/>
        <end position="33"/>
    </location>
</feature>
<feature type="chain" id="PRO_0000212469" description="Putative divalent cation/proton antiporter TMEM165">
    <location>
        <begin position="34"/>
        <end position="323"/>
    </location>
</feature>
<feature type="topological domain" description="Lumenal" evidence="3">
    <location>
        <begin position="34"/>
        <end position="89"/>
    </location>
</feature>
<feature type="transmembrane region" description="Helical" evidence="3">
    <location>
        <begin position="90"/>
        <end position="110"/>
    </location>
</feature>
<feature type="topological domain" description="Cytoplasmic" evidence="3">
    <location>
        <begin position="111"/>
        <end position="126"/>
    </location>
</feature>
<feature type="transmembrane region" description="Helical" evidence="3">
    <location>
        <begin position="127"/>
        <end position="147"/>
    </location>
</feature>
<feature type="topological domain" description="Lumenal" evidence="3">
    <location>
        <begin position="148"/>
        <end position="151"/>
    </location>
</feature>
<feature type="transmembrane region" description="Helical" evidence="3">
    <location>
        <begin position="152"/>
        <end position="172"/>
    </location>
</feature>
<feature type="topological domain" description="Cytoplasmic" evidence="3">
    <location>
        <begin position="173"/>
        <end position="227"/>
    </location>
</feature>
<feature type="transmembrane region" description="Helical" evidence="3">
    <location>
        <begin position="228"/>
        <end position="248"/>
    </location>
</feature>
<feature type="topological domain" description="Lumenal" evidence="3">
    <location>
        <begin position="249"/>
        <end position="266"/>
    </location>
</feature>
<feature type="transmembrane region" description="Helical" evidence="3">
    <location>
        <begin position="267"/>
        <end position="287"/>
    </location>
</feature>
<feature type="topological domain" description="Cytoplasmic" evidence="3">
    <location>
        <begin position="288"/>
        <end position="298"/>
    </location>
</feature>
<feature type="transmembrane region" description="Helical" evidence="3">
    <location>
        <begin position="299"/>
        <end position="319"/>
    </location>
</feature>
<feature type="topological domain" description="Lumenal" evidence="3">
    <location>
        <begin position="320"/>
        <end position="323"/>
    </location>
</feature>
<feature type="region of interest" description="Disordered" evidence="4">
    <location>
        <begin position="35"/>
        <end position="60"/>
    </location>
</feature>
<feature type="coiled-coil region" evidence="3">
    <location>
        <begin position="184"/>
        <end position="211"/>
    </location>
</feature>
<feature type="compositionally biased region" description="Basic and acidic residues" evidence="4">
    <location>
        <begin position="35"/>
        <end position="44"/>
    </location>
</feature>
<feature type="compositionally biased region" description="Low complexity" evidence="4">
    <location>
        <begin position="50"/>
        <end position="59"/>
    </location>
</feature>
<protein>
    <recommendedName>
        <fullName evidence="2">Putative divalent cation/proton antiporter TMEM165</fullName>
    </recommendedName>
    <alternativeName>
        <fullName>TPA-regulated locus protein</fullName>
    </alternativeName>
    <alternativeName>
        <fullName>Transmembrane protein 165</fullName>
    </alternativeName>
    <alternativeName>
        <fullName>Transmembrane protein PFT27</fullName>
    </alternativeName>
    <alternativeName>
        <fullName>Transmembrane protein TPARL</fullName>
    </alternativeName>
</protein>
<gene>
    <name evidence="6 8" type="primary">Tmem165</name>
    <name type="synonym">Tparl</name>
</gene>
<sequence>MAAAARGSGRAPTRRLLVLLLLQLLWAPAGVRAGPEEDLSHRNQEPPAPAQQLQPQPAAVQGLEPARAEKGLTPVAPVHTNKEDAAAQTNLGFIHAFVAAISVIIVSELGDKTFFIAAIMAMRYNRLTVLAGAMLALALMTCLSVLFGYATTVIPRVYTYYVSTALFAIFGIRMLREGLKMSPDEGQEELEEVQAELKKKDEEFQRTKLLNGPDVETGTSTAIPQKKWLHFISPIFVQALTLTFLAEWGDRSQLTTIVLAAREDPYGVAVGGTVGHCLCTGLAVIGGRMIAQKISVRTVTIIGGIVFLAFAFSALFISPESGF</sequence>
<name>TM165_MOUSE</name>
<reference key="1">
    <citation type="journal article" date="1988" name="Biochem. Biophys. Res. Commun.">
        <title>Messenger RNA expressed in mouse teratocarcinoma stem cells and down-regulated by a tumor-promoting phorbol ester codes for a novel transmembrane protein.</title>
        <authorList>
            <person name="Akagi J."/>
            <person name="Nomiyama H."/>
            <person name="Setoyama C."/>
            <person name="Shimada K."/>
            <person name="Akagi M."/>
        </authorList>
    </citation>
    <scope>NUCLEOTIDE SEQUENCE [MRNA]</scope>
    <source>
        <tissue>Teratocarcinoma</tissue>
    </source>
</reference>
<reference key="2">
    <citation type="journal article" date="2000" name="Genome Res.">
        <title>The mouse Clock locus: sequence and comparative analysis of 204 kb from mouse chromosome 5.</title>
        <authorList>
            <person name="Wilsbacher L.D."/>
            <person name="Sangoram A.M."/>
            <person name="Antoch M.P."/>
            <person name="Takahashi J.S."/>
        </authorList>
    </citation>
    <scope>NUCLEOTIDE SEQUENCE [GENOMIC DNA]</scope>
    <source>
        <strain>129/Sv</strain>
    </source>
</reference>
<reference key="3">
    <citation type="journal article" date="2010" name="Cell">
        <title>A tissue-specific atlas of mouse protein phosphorylation and expression.</title>
        <authorList>
            <person name="Huttlin E.L."/>
            <person name="Jedrychowski M.P."/>
            <person name="Elias J.E."/>
            <person name="Goswami T."/>
            <person name="Rad R."/>
            <person name="Beausoleil S.A."/>
            <person name="Villen J."/>
            <person name="Haas W."/>
            <person name="Sowa M.E."/>
            <person name="Gygi S.P."/>
        </authorList>
    </citation>
    <scope>IDENTIFICATION BY MASS SPECTROMETRY [LARGE SCALE ANALYSIS]</scope>
    <source>
        <tissue>Lung</tissue>
        <tissue>Pancreas</tissue>
        <tissue>Spleen</tissue>
    </source>
</reference>
<reference key="4">
    <citation type="journal article" date="2019" name="J. Biol. Chem.">
        <title>Milk biosynthesis requires the Golgi cation exchanger TMEM165.</title>
        <authorList>
            <person name="Snyder N.A."/>
            <person name="Palmer M.V."/>
            <person name="Reinhardt T.A."/>
            <person name="Cunningham K.W."/>
        </authorList>
    </citation>
    <scope>FUNCTION</scope>
    <scope>SUBCELLULAR LOCATION</scope>
    <scope>TISSUE SPECIFICITY</scope>
</reference>
<comment type="function">
    <text evidence="1 2 5">Putative divalent cation:proton antiporter that exchanges calcium or manganese ions for protons across the Golgi membrane. Mediates the reversible transport of calcium or manganese to the Golgi lumen driven by the proton gradient and possibly the membrane potential generated by V-ATPase. Provides calcium or manganese cofactors to resident Golgi enzymes and contributes to the maintenance of an acidic luminal Golgi pH required for proper functioning of the secretory pathway (By similarity). Promotes Ca(2+) storage within the Golgi lumen of the mammary epithelial cells to be then secreted into milk (PubMed:30622138). The transport mechanism and stoichiometry remains to be elucidated (By similarity).</text>
</comment>
<comment type="catalytic activity">
    <reaction evidence="2">
        <text>Ca(2+)(in) + n H(+)(out) = Ca(2+)(out) + n H(+)(in)</text>
        <dbReference type="Rhea" id="RHEA:76631"/>
        <dbReference type="ChEBI" id="CHEBI:15378"/>
        <dbReference type="ChEBI" id="CHEBI:29108"/>
    </reaction>
</comment>
<comment type="catalytic activity">
    <reaction evidence="2">
        <text>Mn(2+)(in) + n H(+)(out) = Mn(2+)(out) + n H(+)(in)</text>
        <dbReference type="Rhea" id="RHEA:76635"/>
        <dbReference type="ChEBI" id="CHEBI:15378"/>
        <dbReference type="ChEBI" id="CHEBI:29035"/>
    </reaction>
</comment>
<comment type="subcellular location">
    <subcellularLocation>
        <location evidence="5">Golgi apparatus membrane</location>
        <topology evidence="3">Multi-pass membrane protein</topology>
    </subcellularLocation>
</comment>
<comment type="tissue specificity">
    <text evidence="5">Expressed in mammary epithelial cells (at protein level).</text>
</comment>
<comment type="developmental stage">
    <text>Expressed in undifferentiated mouse F9 teratocarcinoma stem cells but disappearing rapidly after treatment with a tumor-promoting phorbol ester.</text>
</comment>
<comment type="similarity">
    <text evidence="7">Belongs to the GDT1 family.</text>
</comment>
<comment type="sequence caution" evidence="7">
    <conflict type="frameshift">
        <sequence resource="EMBL-CDS" id="AAA40456"/>
    </conflict>
</comment>
<organism>
    <name type="scientific">Mus musculus</name>
    <name type="common">Mouse</name>
    <dbReference type="NCBI Taxonomy" id="10090"/>
    <lineage>
        <taxon>Eukaryota</taxon>
        <taxon>Metazoa</taxon>
        <taxon>Chordata</taxon>
        <taxon>Craniata</taxon>
        <taxon>Vertebrata</taxon>
        <taxon>Euteleostomi</taxon>
        <taxon>Mammalia</taxon>
        <taxon>Eutheria</taxon>
        <taxon>Euarchontoglires</taxon>
        <taxon>Glires</taxon>
        <taxon>Rodentia</taxon>
        <taxon>Myomorpha</taxon>
        <taxon>Muroidea</taxon>
        <taxon>Muridae</taxon>
        <taxon>Murinae</taxon>
        <taxon>Mus</taxon>
        <taxon>Mus</taxon>
    </lineage>
</organism>